<reference key="1">
    <citation type="journal article" date="1997" name="Nature">
        <title>The nucleotide sequence of Saccharomyces cerevisiae chromosome XII.</title>
        <authorList>
            <person name="Johnston M."/>
            <person name="Hillier L.W."/>
            <person name="Riles L."/>
            <person name="Albermann K."/>
            <person name="Andre B."/>
            <person name="Ansorge W."/>
            <person name="Benes V."/>
            <person name="Brueckner M."/>
            <person name="Delius H."/>
            <person name="Dubois E."/>
            <person name="Duesterhoeft A."/>
            <person name="Entian K.-D."/>
            <person name="Floeth M."/>
            <person name="Goffeau A."/>
            <person name="Hebling U."/>
            <person name="Heumann K."/>
            <person name="Heuss-Neitzel D."/>
            <person name="Hilbert H."/>
            <person name="Hilger F."/>
            <person name="Kleine K."/>
            <person name="Koetter P."/>
            <person name="Louis E.J."/>
            <person name="Messenguy F."/>
            <person name="Mewes H.-W."/>
            <person name="Miosga T."/>
            <person name="Moestl D."/>
            <person name="Mueller-Auer S."/>
            <person name="Nentwich U."/>
            <person name="Obermaier B."/>
            <person name="Piravandi E."/>
            <person name="Pohl T.M."/>
            <person name="Portetelle D."/>
            <person name="Purnelle B."/>
            <person name="Rechmann S."/>
            <person name="Rieger M."/>
            <person name="Rinke M."/>
            <person name="Rose M."/>
            <person name="Scharfe M."/>
            <person name="Scherens B."/>
            <person name="Scholler P."/>
            <person name="Schwager C."/>
            <person name="Schwarz S."/>
            <person name="Underwood A.P."/>
            <person name="Urrestarazu L.A."/>
            <person name="Vandenbol M."/>
            <person name="Verhasselt P."/>
            <person name="Vierendeels F."/>
            <person name="Voet M."/>
            <person name="Volckaert G."/>
            <person name="Voss H."/>
            <person name="Wambutt R."/>
            <person name="Wedler E."/>
            <person name="Wedler H."/>
            <person name="Zimmermann F.K."/>
            <person name="Zollner A."/>
            <person name="Hani J."/>
            <person name="Hoheisel J.D."/>
        </authorList>
    </citation>
    <scope>NUCLEOTIDE SEQUENCE [LARGE SCALE GENOMIC DNA]</scope>
    <source>
        <strain>ATCC 204508 / S288c</strain>
    </source>
</reference>
<reference key="2">
    <citation type="journal article" date="2014" name="G3 (Bethesda)">
        <title>The reference genome sequence of Saccharomyces cerevisiae: Then and now.</title>
        <authorList>
            <person name="Engel S.R."/>
            <person name="Dietrich F.S."/>
            <person name="Fisk D.G."/>
            <person name="Binkley G."/>
            <person name="Balakrishnan R."/>
            <person name="Costanzo M.C."/>
            <person name="Dwight S.S."/>
            <person name="Hitz B.C."/>
            <person name="Karra K."/>
            <person name="Nash R.S."/>
            <person name="Weng S."/>
            <person name="Wong E.D."/>
            <person name="Lloyd P."/>
            <person name="Skrzypek M.S."/>
            <person name="Miyasato S.R."/>
            <person name="Simison M."/>
            <person name="Cherry J.M."/>
        </authorList>
    </citation>
    <scope>GENOME REANNOTATION</scope>
    <source>
        <strain>ATCC 204508 / S288c</strain>
    </source>
</reference>
<reference key="3">
    <citation type="journal article" date="2005" name="Fungal Genet. Biol.">
        <title>A genome-wide screen for Saccharomyces cerevisiae nonessential genes involved in mannosyl phosphate transfer to mannoprotein-linked oligosaccharides.</title>
        <authorList>
            <person name="Corbacho I."/>
            <person name="Olivero I."/>
            <person name="Hernandez L.M."/>
        </authorList>
    </citation>
    <scope>FUNCTION</scope>
</reference>
<proteinExistence type="predicted"/>
<accession>Q07887</accession>
<accession>D6VXV9</accession>
<name>LDB18_YEAST</name>
<protein>
    <recommendedName>
        <fullName>Protein LDB18</fullName>
    </recommendedName>
    <alternativeName>
        <fullName>Low dye-binding protein 18</fullName>
    </alternativeName>
</protein>
<organism>
    <name type="scientific">Saccharomyces cerevisiae (strain ATCC 204508 / S288c)</name>
    <name type="common">Baker's yeast</name>
    <dbReference type="NCBI Taxonomy" id="559292"/>
    <lineage>
        <taxon>Eukaryota</taxon>
        <taxon>Fungi</taxon>
        <taxon>Dikarya</taxon>
        <taxon>Ascomycota</taxon>
        <taxon>Saccharomycotina</taxon>
        <taxon>Saccharomycetes</taxon>
        <taxon>Saccharomycetales</taxon>
        <taxon>Saccharomycetaceae</taxon>
        <taxon>Saccharomyces</taxon>
    </lineage>
</organism>
<gene>
    <name type="primary">LDB18</name>
    <name type="ordered locus">YLL049W</name>
</gene>
<feature type="chain" id="PRO_0000240386" description="Protein LDB18">
    <location>
        <begin position="1"/>
        <end position="179"/>
    </location>
</feature>
<dbReference type="EMBL" id="Z73154">
    <property type="protein sequence ID" value="CAA97501.1"/>
    <property type="molecule type" value="Genomic_DNA"/>
</dbReference>
<dbReference type="EMBL" id="BK006945">
    <property type="protein sequence ID" value="DAA09275.1"/>
    <property type="molecule type" value="Genomic_DNA"/>
</dbReference>
<dbReference type="PIR" id="S64801">
    <property type="entry name" value="S64801"/>
</dbReference>
<dbReference type="RefSeq" id="NP_013051.1">
    <property type="nucleotide sequence ID" value="NM_001181869.1"/>
</dbReference>
<dbReference type="SMR" id="Q07887"/>
<dbReference type="BioGRID" id="31266">
    <property type="interactions" value="460"/>
</dbReference>
<dbReference type="ComplexPortal" id="CPX-1805">
    <property type="entry name" value="Dynactin complex"/>
</dbReference>
<dbReference type="DIP" id="DIP-1932N"/>
<dbReference type="FunCoup" id="Q07887">
    <property type="interactions" value="48"/>
</dbReference>
<dbReference type="IntAct" id="Q07887">
    <property type="interactions" value="8"/>
</dbReference>
<dbReference type="MINT" id="Q07887"/>
<dbReference type="STRING" id="4932.YLL049W"/>
<dbReference type="PaxDb" id="4932-YLL049W"/>
<dbReference type="PeptideAtlas" id="Q07887"/>
<dbReference type="EnsemblFungi" id="YLL049W_mRNA">
    <property type="protein sequence ID" value="YLL049W"/>
    <property type="gene ID" value="YLL049W"/>
</dbReference>
<dbReference type="GeneID" id="850677"/>
<dbReference type="KEGG" id="sce:YLL049W"/>
<dbReference type="AGR" id="SGD:S000003972"/>
<dbReference type="SGD" id="S000003972">
    <property type="gene designation" value="LDB18"/>
</dbReference>
<dbReference type="VEuPathDB" id="FungiDB:YLL049W"/>
<dbReference type="eggNOG" id="ENOG502SBP6">
    <property type="taxonomic scope" value="Eukaryota"/>
</dbReference>
<dbReference type="HOGENOM" id="CLU_1590434_0_0_1"/>
<dbReference type="InParanoid" id="Q07887"/>
<dbReference type="OMA" id="VDNCNIM"/>
<dbReference type="OrthoDB" id="4038250at2759"/>
<dbReference type="BioCyc" id="YEAST:G3O-32148-MONOMER"/>
<dbReference type="BioGRID-ORCS" id="850677">
    <property type="hits" value="0 hits in 10 CRISPR screens"/>
</dbReference>
<dbReference type="PRO" id="PR:Q07887"/>
<dbReference type="Proteomes" id="UP000002311">
    <property type="component" value="Chromosome XII"/>
</dbReference>
<dbReference type="RNAct" id="Q07887">
    <property type="molecule type" value="protein"/>
</dbReference>
<dbReference type="GO" id="GO:0015629">
    <property type="term" value="C:actin cytoskeleton"/>
    <property type="evidence" value="ECO:0000303"/>
    <property type="project" value="ComplexPortal"/>
</dbReference>
<dbReference type="GO" id="GO:0005869">
    <property type="term" value="C:dynactin complex"/>
    <property type="evidence" value="ECO:0000314"/>
    <property type="project" value="SGD"/>
</dbReference>
<dbReference type="GO" id="GO:0030048">
    <property type="term" value="P:actin filament-based movement"/>
    <property type="evidence" value="ECO:0000303"/>
    <property type="project" value="ComplexPortal"/>
</dbReference>
<dbReference type="GO" id="GO:0000132">
    <property type="term" value="P:establishment of mitotic spindle orientation"/>
    <property type="evidence" value="ECO:0000315"/>
    <property type="project" value="SGD"/>
</dbReference>
<comment type="function">
    <text evidence="1">May be involved in protein-linked oligosaccharide phosphorylation since the deletion reduces the negative charge of the cell surface.</text>
</comment>
<sequence length="179" mass="20847">MPGLKLVEALEYRCDRLERLIGAGYSANSDVSVQLDELYNQLHRLYFQGLKYSQDLLQLFNTFMAEDIENVGAPDDICIFASCFDDIYTLYSAFDELNSQYMEFCQISKSSLDQISFKDANIETKQLKKLPELVDNCNIMILRSIAILNRFIDWNIEVNGFFQFQKKRLLNLQKVIYST</sequence>
<evidence type="ECO:0000269" key="1">
    <source>
    </source>
</evidence>
<keyword id="KW-1185">Reference proteome</keyword>